<accession>B8J879</accession>
<organism>
    <name type="scientific">Anaeromyxobacter dehalogenans (strain 2CP-1 / ATCC BAA-258)</name>
    <dbReference type="NCBI Taxonomy" id="455488"/>
    <lineage>
        <taxon>Bacteria</taxon>
        <taxon>Pseudomonadati</taxon>
        <taxon>Myxococcota</taxon>
        <taxon>Myxococcia</taxon>
        <taxon>Myxococcales</taxon>
        <taxon>Cystobacterineae</taxon>
        <taxon>Anaeromyxobacteraceae</taxon>
        <taxon>Anaeromyxobacter</taxon>
    </lineage>
</organism>
<reference key="1">
    <citation type="submission" date="2009-01" db="EMBL/GenBank/DDBJ databases">
        <title>Complete sequence of Anaeromyxobacter dehalogenans 2CP-1.</title>
        <authorList>
            <person name="Lucas S."/>
            <person name="Copeland A."/>
            <person name="Lapidus A."/>
            <person name="Glavina del Rio T."/>
            <person name="Dalin E."/>
            <person name="Tice H."/>
            <person name="Bruce D."/>
            <person name="Goodwin L."/>
            <person name="Pitluck S."/>
            <person name="Saunders E."/>
            <person name="Brettin T."/>
            <person name="Detter J.C."/>
            <person name="Han C."/>
            <person name="Larimer F."/>
            <person name="Land M."/>
            <person name="Hauser L."/>
            <person name="Kyrpides N."/>
            <person name="Ovchinnikova G."/>
            <person name="Beliaev A.S."/>
            <person name="Richardson P."/>
        </authorList>
    </citation>
    <scope>NUCLEOTIDE SEQUENCE [LARGE SCALE GENOMIC DNA]</scope>
    <source>
        <strain>2CP-1 / ATCC BAA-258</strain>
    </source>
</reference>
<proteinExistence type="inferred from homology"/>
<dbReference type="EMBL" id="CP001359">
    <property type="protein sequence ID" value="ACL65378.1"/>
    <property type="molecule type" value="Genomic_DNA"/>
</dbReference>
<dbReference type="RefSeq" id="WP_012525985.1">
    <property type="nucleotide sequence ID" value="NC_011891.1"/>
</dbReference>
<dbReference type="SMR" id="B8J879"/>
<dbReference type="KEGG" id="acp:A2cp1_2037"/>
<dbReference type="HOGENOM" id="CLU_055188_4_2_7"/>
<dbReference type="Proteomes" id="UP000007089">
    <property type="component" value="Chromosome"/>
</dbReference>
<dbReference type="GO" id="GO:0022625">
    <property type="term" value="C:cytosolic large ribosomal subunit"/>
    <property type="evidence" value="ECO:0007669"/>
    <property type="project" value="TreeGrafter"/>
</dbReference>
<dbReference type="GO" id="GO:0019843">
    <property type="term" value="F:rRNA binding"/>
    <property type="evidence" value="ECO:0007669"/>
    <property type="project" value="UniProtKB-UniRule"/>
</dbReference>
<dbReference type="GO" id="GO:0003735">
    <property type="term" value="F:structural constituent of ribosome"/>
    <property type="evidence" value="ECO:0007669"/>
    <property type="project" value="InterPro"/>
</dbReference>
<dbReference type="GO" id="GO:0006412">
    <property type="term" value="P:translation"/>
    <property type="evidence" value="ECO:0007669"/>
    <property type="project" value="UniProtKB-UniRule"/>
</dbReference>
<dbReference type="Gene3D" id="3.100.10.10">
    <property type="match status" value="1"/>
</dbReference>
<dbReference type="HAMAP" id="MF_01341">
    <property type="entry name" value="Ribosomal_uL15"/>
    <property type="match status" value="1"/>
</dbReference>
<dbReference type="InterPro" id="IPR030878">
    <property type="entry name" value="Ribosomal_uL15"/>
</dbReference>
<dbReference type="InterPro" id="IPR021131">
    <property type="entry name" value="Ribosomal_uL15/eL18"/>
</dbReference>
<dbReference type="InterPro" id="IPR036227">
    <property type="entry name" value="Ribosomal_uL15/eL18_sf"/>
</dbReference>
<dbReference type="InterPro" id="IPR005749">
    <property type="entry name" value="Ribosomal_uL15_bac-type"/>
</dbReference>
<dbReference type="NCBIfam" id="TIGR01071">
    <property type="entry name" value="rplO_bact"/>
    <property type="match status" value="1"/>
</dbReference>
<dbReference type="PANTHER" id="PTHR12934">
    <property type="entry name" value="50S RIBOSOMAL PROTEIN L15"/>
    <property type="match status" value="1"/>
</dbReference>
<dbReference type="PANTHER" id="PTHR12934:SF11">
    <property type="entry name" value="LARGE RIBOSOMAL SUBUNIT PROTEIN UL15M"/>
    <property type="match status" value="1"/>
</dbReference>
<dbReference type="Pfam" id="PF00828">
    <property type="entry name" value="Ribosomal_L27A"/>
    <property type="match status" value="1"/>
</dbReference>
<dbReference type="SUPFAM" id="SSF52080">
    <property type="entry name" value="Ribosomal proteins L15p and L18e"/>
    <property type="match status" value="1"/>
</dbReference>
<feature type="chain" id="PRO_1000166269" description="Large ribosomal subunit protein uL15">
    <location>
        <begin position="1"/>
        <end position="165"/>
    </location>
</feature>
<feature type="region of interest" description="Disordered" evidence="2">
    <location>
        <begin position="1"/>
        <end position="44"/>
    </location>
</feature>
<feature type="compositionally biased region" description="Gly residues" evidence="2">
    <location>
        <begin position="21"/>
        <end position="37"/>
    </location>
</feature>
<evidence type="ECO:0000255" key="1">
    <source>
        <dbReference type="HAMAP-Rule" id="MF_01341"/>
    </source>
</evidence>
<evidence type="ECO:0000256" key="2">
    <source>
        <dbReference type="SAM" id="MobiDB-lite"/>
    </source>
</evidence>
<evidence type="ECO:0000305" key="3"/>
<gene>
    <name evidence="1" type="primary">rplO</name>
    <name type="ordered locus">A2cp1_2037</name>
</gene>
<comment type="function">
    <text evidence="1">Binds to the 23S rRNA.</text>
</comment>
<comment type="subunit">
    <text evidence="1">Part of the 50S ribosomal subunit.</text>
</comment>
<comment type="similarity">
    <text evidence="1">Belongs to the universal ribosomal protein uL15 family.</text>
</comment>
<sequence>MSLNQLKAPRGANRAKKRVGRGQGSGLGKTAGRGGKGQKARSGNMHFEGFEGGQMPLQRRLPKFGFHNIFRRELEEVKVGDLQGLSGVVDPAALKSAGLVRGNRDGVVVLAGGELSSALTVKVHRVTAGARATIEKAGGKVELIPAPQTMHQKAKAAKKAAAQAK</sequence>
<name>RL15_ANAD2</name>
<protein>
    <recommendedName>
        <fullName evidence="1">Large ribosomal subunit protein uL15</fullName>
    </recommendedName>
    <alternativeName>
        <fullName evidence="3">50S ribosomal protein L15</fullName>
    </alternativeName>
</protein>
<keyword id="KW-0687">Ribonucleoprotein</keyword>
<keyword id="KW-0689">Ribosomal protein</keyword>
<keyword id="KW-0694">RNA-binding</keyword>
<keyword id="KW-0699">rRNA-binding</keyword>